<evidence type="ECO:0000250" key="1"/>
<evidence type="ECO:0000255" key="2">
    <source>
        <dbReference type="HAMAP-Rule" id="MF_01356"/>
    </source>
</evidence>
<keyword id="KW-0004">4Fe-4S</keyword>
<keyword id="KW-0997">Cell inner membrane</keyword>
<keyword id="KW-1003">Cell membrane</keyword>
<keyword id="KW-0408">Iron</keyword>
<keyword id="KW-0411">Iron-sulfur</keyword>
<keyword id="KW-0472">Membrane</keyword>
<keyword id="KW-0479">Metal-binding</keyword>
<keyword id="KW-0520">NAD</keyword>
<keyword id="KW-0874">Quinone</keyword>
<keyword id="KW-1278">Translocase</keyword>
<keyword id="KW-0813">Transport</keyword>
<keyword id="KW-0830">Ubiquinone</keyword>
<reference key="1">
    <citation type="journal article" date="2005" name="J. Bacteriol.">
        <title>Completion of the genome sequence of Brucella abortus and comparison to the highly similar genomes of Brucella melitensis and Brucella suis.</title>
        <authorList>
            <person name="Halling S.M."/>
            <person name="Peterson-Burch B.D."/>
            <person name="Bricker B.J."/>
            <person name="Zuerner R.L."/>
            <person name="Qing Z."/>
            <person name="Li L.-L."/>
            <person name="Kapur V."/>
            <person name="Alt D.P."/>
            <person name="Olsen S.C."/>
        </authorList>
    </citation>
    <scope>NUCLEOTIDE SEQUENCE [LARGE SCALE GENOMIC DNA]</scope>
    <source>
        <strain>9-941</strain>
    </source>
</reference>
<feature type="chain" id="PRO_0000358355" description="NADH-quinone oxidoreductase subunit B">
    <location>
        <begin position="1"/>
        <end position="193"/>
    </location>
</feature>
<feature type="binding site" evidence="2">
    <location>
        <position position="72"/>
    </location>
    <ligand>
        <name>[4Fe-4S] cluster</name>
        <dbReference type="ChEBI" id="CHEBI:49883"/>
    </ligand>
</feature>
<feature type="binding site" evidence="2">
    <location>
        <position position="73"/>
    </location>
    <ligand>
        <name>[4Fe-4S] cluster</name>
        <dbReference type="ChEBI" id="CHEBI:49883"/>
    </ligand>
</feature>
<feature type="binding site" evidence="2">
    <location>
        <position position="137"/>
    </location>
    <ligand>
        <name>[4Fe-4S] cluster</name>
        <dbReference type="ChEBI" id="CHEBI:49883"/>
    </ligand>
</feature>
<feature type="binding site" evidence="2">
    <location>
        <position position="167"/>
    </location>
    <ligand>
        <name>[4Fe-4S] cluster</name>
        <dbReference type="ChEBI" id="CHEBI:49883"/>
    </ligand>
</feature>
<sequence>MGLTGTNTTLVAPQPKGILDPRTGKTVGSDDAFFNDLNGELSDKGFIVTSADALITWARTGSLMWMTFGLACCAVEMMHISMPRYDAERFGIAPRASPRQSDVMIVAGTLTNKMAPALRKVYDQMPEPRYVISMGSCANGGGYYHYSYSVVRGCDRVVPVDIYVPGCPPTAEALLYGILLLQKKIRRTGTIER</sequence>
<dbReference type="EC" id="7.1.1.-" evidence="2"/>
<dbReference type="EMBL" id="AE017223">
    <property type="protein sequence ID" value="AAX74184.1"/>
    <property type="molecule type" value="Genomic_DNA"/>
</dbReference>
<dbReference type="RefSeq" id="WP_002963938.1">
    <property type="nucleotide sequence ID" value="NC_006932.1"/>
</dbReference>
<dbReference type="SMR" id="Q57DV0"/>
<dbReference type="EnsemblBacteria" id="AAX74184">
    <property type="protein sequence ID" value="AAX74184"/>
    <property type="gene ID" value="BruAb1_0817"/>
</dbReference>
<dbReference type="KEGG" id="bmb:BruAb1_0817"/>
<dbReference type="HOGENOM" id="CLU_055737_7_3_5"/>
<dbReference type="Proteomes" id="UP000000540">
    <property type="component" value="Chromosome I"/>
</dbReference>
<dbReference type="GO" id="GO:0005886">
    <property type="term" value="C:plasma membrane"/>
    <property type="evidence" value="ECO:0007669"/>
    <property type="project" value="UniProtKB-SubCell"/>
</dbReference>
<dbReference type="GO" id="GO:0045271">
    <property type="term" value="C:respiratory chain complex I"/>
    <property type="evidence" value="ECO:0007669"/>
    <property type="project" value="TreeGrafter"/>
</dbReference>
<dbReference type="GO" id="GO:0051539">
    <property type="term" value="F:4 iron, 4 sulfur cluster binding"/>
    <property type="evidence" value="ECO:0007669"/>
    <property type="project" value="UniProtKB-KW"/>
</dbReference>
<dbReference type="GO" id="GO:0005506">
    <property type="term" value="F:iron ion binding"/>
    <property type="evidence" value="ECO:0007669"/>
    <property type="project" value="UniProtKB-UniRule"/>
</dbReference>
<dbReference type="GO" id="GO:0008137">
    <property type="term" value="F:NADH dehydrogenase (ubiquinone) activity"/>
    <property type="evidence" value="ECO:0007669"/>
    <property type="project" value="InterPro"/>
</dbReference>
<dbReference type="GO" id="GO:0050136">
    <property type="term" value="F:NADH:ubiquinone reductase (non-electrogenic) activity"/>
    <property type="evidence" value="ECO:0007669"/>
    <property type="project" value="UniProtKB-UniRule"/>
</dbReference>
<dbReference type="GO" id="GO:0048038">
    <property type="term" value="F:quinone binding"/>
    <property type="evidence" value="ECO:0007669"/>
    <property type="project" value="UniProtKB-KW"/>
</dbReference>
<dbReference type="GO" id="GO:0009060">
    <property type="term" value="P:aerobic respiration"/>
    <property type="evidence" value="ECO:0007669"/>
    <property type="project" value="TreeGrafter"/>
</dbReference>
<dbReference type="GO" id="GO:0015990">
    <property type="term" value="P:electron transport coupled proton transport"/>
    <property type="evidence" value="ECO:0007669"/>
    <property type="project" value="TreeGrafter"/>
</dbReference>
<dbReference type="FunFam" id="3.40.50.12280:FF:000001">
    <property type="entry name" value="NADH-quinone oxidoreductase subunit B 2"/>
    <property type="match status" value="1"/>
</dbReference>
<dbReference type="Gene3D" id="3.40.50.12280">
    <property type="match status" value="1"/>
</dbReference>
<dbReference type="HAMAP" id="MF_01356">
    <property type="entry name" value="NDH1_NuoB"/>
    <property type="match status" value="1"/>
</dbReference>
<dbReference type="InterPro" id="IPR006137">
    <property type="entry name" value="NADH_UbQ_OxRdtase-like_20kDa"/>
</dbReference>
<dbReference type="InterPro" id="IPR006138">
    <property type="entry name" value="NADH_UQ_OxRdtase_20Kd_su"/>
</dbReference>
<dbReference type="NCBIfam" id="TIGR01957">
    <property type="entry name" value="nuoB_fam"/>
    <property type="match status" value="1"/>
</dbReference>
<dbReference type="NCBIfam" id="NF005012">
    <property type="entry name" value="PRK06411.1"/>
    <property type="match status" value="1"/>
</dbReference>
<dbReference type="PANTHER" id="PTHR11995">
    <property type="entry name" value="NADH DEHYDROGENASE"/>
    <property type="match status" value="1"/>
</dbReference>
<dbReference type="PANTHER" id="PTHR11995:SF14">
    <property type="entry name" value="NADH DEHYDROGENASE [UBIQUINONE] IRON-SULFUR PROTEIN 7, MITOCHONDRIAL"/>
    <property type="match status" value="1"/>
</dbReference>
<dbReference type="Pfam" id="PF01058">
    <property type="entry name" value="Oxidored_q6"/>
    <property type="match status" value="1"/>
</dbReference>
<dbReference type="SUPFAM" id="SSF56770">
    <property type="entry name" value="HydA/Nqo6-like"/>
    <property type="match status" value="1"/>
</dbReference>
<dbReference type="PROSITE" id="PS01150">
    <property type="entry name" value="COMPLEX1_20K"/>
    <property type="match status" value="1"/>
</dbReference>
<name>NUOB_BRUAB</name>
<gene>
    <name evidence="2" type="primary">nuoB</name>
    <name type="ordered locus">BruAb1_0817</name>
</gene>
<accession>Q57DV0</accession>
<protein>
    <recommendedName>
        <fullName evidence="2">NADH-quinone oxidoreductase subunit B</fullName>
        <ecNumber evidence="2">7.1.1.-</ecNumber>
    </recommendedName>
    <alternativeName>
        <fullName evidence="2">NADH dehydrogenase I subunit B</fullName>
    </alternativeName>
    <alternativeName>
        <fullName evidence="2">NDH-1 subunit B</fullName>
    </alternativeName>
</protein>
<proteinExistence type="inferred from homology"/>
<comment type="function">
    <text evidence="1">NDH-1 shuttles electrons from NADH, via FMN and iron-sulfur (Fe-S) centers, to quinones in the respiratory chain. Couples the redox reaction to proton translocation (for every two electrons transferred, four hydrogen ions are translocated across the cytoplasmic membrane), and thus conserves the redox energy in a proton gradient (By similarity).</text>
</comment>
<comment type="catalytic activity">
    <reaction evidence="2">
        <text>a quinone + NADH + 5 H(+)(in) = a quinol + NAD(+) + 4 H(+)(out)</text>
        <dbReference type="Rhea" id="RHEA:57888"/>
        <dbReference type="ChEBI" id="CHEBI:15378"/>
        <dbReference type="ChEBI" id="CHEBI:24646"/>
        <dbReference type="ChEBI" id="CHEBI:57540"/>
        <dbReference type="ChEBI" id="CHEBI:57945"/>
        <dbReference type="ChEBI" id="CHEBI:132124"/>
    </reaction>
</comment>
<comment type="cofactor">
    <cofactor evidence="2">
        <name>[4Fe-4S] cluster</name>
        <dbReference type="ChEBI" id="CHEBI:49883"/>
    </cofactor>
    <text evidence="2">Binds 1 [4Fe-4S] cluster.</text>
</comment>
<comment type="subunit">
    <text evidence="2">NDH-1 is composed of 14 different subunits. Subunits NuoB, C, D, E, F, and G constitute the peripheral sector of the complex.</text>
</comment>
<comment type="subcellular location">
    <subcellularLocation>
        <location evidence="2">Cell inner membrane</location>
        <topology evidence="2">Peripheral membrane protein</topology>
        <orientation evidence="2">Cytoplasmic side</orientation>
    </subcellularLocation>
</comment>
<comment type="similarity">
    <text evidence="2">Belongs to the complex I 20 kDa subunit family.</text>
</comment>
<organism>
    <name type="scientific">Brucella abortus biovar 1 (strain 9-941)</name>
    <dbReference type="NCBI Taxonomy" id="262698"/>
    <lineage>
        <taxon>Bacteria</taxon>
        <taxon>Pseudomonadati</taxon>
        <taxon>Pseudomonadota</taxon>
        <taxon>Alphaproteobacteria</taxon>
        <taxon>Hyphomicrobiales</taxon>
        <taxon>Brucellaceae</taxon>
        <taxon>Brucella/Ochrobactrum group</taxon>
        <taxon>Brucella</taxon>
    </lineage>
</organism>